<feature type="chain" id="PRO_1000084880" description="DNA polymerase IV">
    <location>
        <begin position="1"/>
        <end position="351"/>
    </location>
</feature>
<feature type="domain" description="UmuC" evidence="1">
    <location>
        <begin position="4"/>
        <end position="185"/>
    </location>
</feature>
<feature type="active site" evidence="1">
    <location>
        <position position="104"/>
    </location>
</feature>
<feature type="binding site" evidence="1">
    <location>
        <position position="8"/>
    </location>
    <ligand>
        <name>Mg(2+)</name>
        <dbReference type="ChEBI" id="CHEBI:18420"/>
    </ligand>
</feature>
<feature type="binding site" evidence="1">
    <location>
        <position position="103"/>
    </location>
    <ligand>
        <name>Mg(2+)</name>
        <dbReference type="ChEBI" id="CHEBI:18420"/>
    </ligand>
</feature>
<feature type="site" description="Substrate discrimination" evidence="1">
    <location>
        <position position="13"/>
    </location>
</feature>
<dbReference type="EC" id="2.7.7.7" evidence="1"/>
<dbReference type="EMBL" id="CP000822">
    <property type="protein sequence ID" value="ABV14065.1"/>
    <property type="molecule type" value="Genomic_DNA"/>
</dbReference>
<dbReference type="RefSeq" id="WP_012133777.1">
    <property type="nucleotide sequence ID" value="NC_009792.1"/>
</dbReference>
<dbReference type="SMR" id="A8AKQ2"/>
<dbReference type="STRING" id="290338.CKO_02960"/>
<dbReference type="GeneID" id="45136776"/>
<dbReference type="KEGG" id="cko:CKO_02960"/>
<dbReference type="HOGENOM" id="CLU_012348_1_2_6"/>
<dbReference type="OrthoDB" id="9808813at2"/>
<dbReference type="Proteomes" id="UP000008148">
    <property type="component" value="Chromosome"/>
</dbReference>
<dbReference type="GO" id="GO:0005829">
    <property type="term" value="C:cytosol"/>
    <property type="evidence" value="ECO:0007669"/>
    <property type="project" value="TreeGrafter"/>
</dbReference>
<dbReference type="GO" id="GO:0003684">
    <property type="term" value="F:damaged DNA binding"/>
    <property type="evidence" value="ECO:0007669"/>
    <property type="project" value="InterPro"/>
</dbReference>
<dbReference type="GO" id="GO:0003887">
    <property type="term" value="F:DNA-directed DNA polymerase activity"/>
    <property type="evidence" value="ECO:0007669"/>
    <property type="project" value="UniProtKB-UniRule"/>
</dbReference>
<dbReference type="GO" id="GO:0000287">
    <property type="term" value="F:magnesium ion binding"/>
    <property type="evidence" value="ECO:0007669"/>
    <property type="project" value="UniProtKB-UniRule"/>
</dbReference>
<dbReference type="GO" id="GO:0006261">
    <property type="term" value="P:DNA-templated DNA replication"/>
    <property type="evidence" value="ECO:0007669"/>
    <property type="project" value="UniProtKB-UniRule"/>
</dbReference>
<dbReference type="GO" id="GO:0042276">
    <property type="term" value="P:error-prone translesion synthesis"/>
    <property type="evidence" value="ECO:0007669"/>
    <property type="project" value="TreeGrafter"/>
</dbReference>
<dbReference type="GO" id="GO:0009432">
    <property type="term" value="P:SOS response"/>
    <property type="evidence" value="ECO:0007669"/>
    <property type="project" value="TreeGrafter"/>
</dbReference>
<dbReference type="CDD" id="cd03586">
    <property type="entry name" value="PolY_Pol_IV_kappa"/>
    <property type="match status" value="1"/>
</dbReference>
<dbReference type="FunFam" id="1.10.150.20:FF:000019">
    <property type="entry name" value="DNA polymerase IV"/>
    <property type="match status" value="1"/>
</dbReference>
<dbReference type="FunFam" id="3.30.1490.100:FF:000002">
    <property type="entry name" value="DNA polymerase IV"/>
    <property type="match status" value="1"/>
</dbReference>
<dbReference type="FunFam" id="3.30.70.270:FF:000002">
    <property type="entry name" value="DNA polymerase IV"/>
    <property type="match status" value="1"/>
</dbReference>
<dbReference type="FunFam" id="3.40.1170.60:FF:000001">
    <property type="entry name" value="DNA polymerase IV"/>
    <property type="match status" value="1"/>
</dbReference>
<dbReference type="Gene3D" id="3.30.70.270">
    <property type="match status" value="1"/>
</dbReference>
<dbReference type="Gene3D" id="3.40.1170.60">
    <property type="match status" value="1"/>
</dbReference>
<dbReference type="Gene3D" id="1.10.150.20">
    <property type="entry name" value="5' to 3' exonuclease, C-terminal subdomain"/>
    <property type="match status" value="1"/>
</dbReference>
<dbReference type="Gene3D" id="3.30.1490.100">
    <property type="entry name" value="DNA polymerase, Y-family, little finger domain"/>
    <property type="match status" value="1"/>
</dbReference>
<dbReference type="HAMAP" id="MF_01113">
    <property type="entry name" value="DNApol_IV"/>
    <property type="match status" value="1"/>
</dbReference>
<dbReference type="InterPro" id="IPR043502">
    <property type="entry name" value="DNA/RNA_pol_sf"/>
</dbReference>
<dbReference type="InterPro" id="IPR036775">
    <property type="entry name" value="DNA_pol_Y-fam_lit_finger_sf"/>
</dbReference>
<dbReference type="InterPro" id="IPR017961">
    <property type="entry name" value="DNA_pol_Y-fam_little_finger"/>
</dbReference>
<dbReference type="InterPro" id="IPR050116">
    <property type="entry name" value="DNA_polymerase-Y"/>
</dbReference>
<dbReference type="InterPro" id="IPR022880">
    <property type="entry name" value="DNApol_IV"/>
</dbReference>
<dbReference type="InterPro" id="IPR053848">
    <property type="entry name" value="IMS_HHH_1"/>
</dbReference>
<dbReference type="InterPro" id="IPR043128">
    <property type="entry name" value="Rev_trsase/Diguanyl_cyclase"/>
</dbReference>
<dbReference type="InterPro" id="IPR001126">
    <property type="entry name" value="UmuC"/>
</dbReference>
<dbReference type="NCBIfam" id="NF002677">
    <property type="entry name" value="PRK02406.1"/>
    <property type="match status" value="1"/>
</dbReference>
<dbReference type="PANTHER" id="PTHR11076:SF33">
    <property type="entry name" value="DNA POLYMERASE KAPPA"/>
    <property type="match status" value="1"/>
</dbReference>
<dbReference type="PANTHER" id="PTHR11076">
    <property type="entry name" value="DNA REPAIR POLYMERASE UMUC / TRANSFERASE FAMILY MEMBER"/>
    <property type="match status" value="1"/>
</dbReference>
<dbReference type="Pfam" id="PF00817">
    <property type="entry name" value="IMS"/>
    <property type="match status" value="1"/>
</dbReference>
<dbReference type="Pfam" id="PF11799">
    <property type="entry name" value="IMS_C"/>
    <property type="match status" value="1"/>
</dbReference>
<dbReference type="Pfam" id="PF21999">
    <property type="entry name" value="IMS_HHH_1"/>
    <property type="match status" value="1"/>
</dbReference>
<dbReference type="SUPFAM" id="SSF56672">
    <property type="entry name" value="DNA/RNA polymerases"/>
    <property type="match status" value="1"/>
</dbReference>
<dbReference type="SUPFAM" id="SSF100879">
    <property type="entry name" value="Lesion bypass DNA polymerase (Y-family), little finger domain"/>
    <property type="match status" value="1"/>
</dbReference>
<dbReference type="PROSITE" id="PS50173">
    <property type="entry name" value="UMUC"/>
    <property type="match status" value="1"/>
</dbReference>
<reference key="1">
    <citation type="submission" date="2007-08" db="EMBL/GenBank/DDBJ databases">
        <authorList>
            <consortium name="The Citrobacter koseri Genome Sequencing Project"/>
            <person name="McClelland M."/>
            <person name="Sanderson E.K."/>
            <person name="Porwollik S."/>
            <person name="Spieth J."/>
            <person name="Clifton W.S."/>
            <person name="Latreille P."/>
            <person name="Courtney L."/>
            <person name="Wang C."/>
            <person name="Pepin K."/>
            <person name="Bhonagiri V."/>
            <person name="Nash W."/>
            <person name="Johnson M."/>
            <person name="Thiruvilangam P."/>
            <person name="Wilson R."/>
        </authorList>
    </citation>
    <scope>NUCLEOTIDE SEQUENCE [LARGE SCALE GENOMIC DNA]</scope>
    <source>
        <strain>ATCC BAA-895 / CDC 4225-83 / SGSC4696</strain>
    </source>
</reference>
<proteinExistence type="inferred from homology"/>
<organism>
    <name type="scientific">Citrobacter koseri (strain ATCC BAA-895 / CDC 4225-83 / SGSC4696)</name>
    <dbReference type="NCBI Taxonomy" id="290338"/>
    <lineage>
        <taxon>Bacteria</taxon>
        <taxon>Pseudomonadati</taxon>
        <taxon>Pseudomonadota</taxon>
        <taxon>Gammaproteobacteria</taxon>
        <taxon>Enterobacterales</taxon>
        <taxon>Enterobacteriaceae</taxon>
        <taxon>Citrobacter</taxon>
    </lineage>
</organism>
<gene>
    <name evidence="1" type="primary">dinB</name>
    <name type="ordered locus">CKO_02960</name>
</gene>
<protein>
    <recommendedName>
        <fullName evidence="1">DNA polymerase IV</fullName>
        <shortName evidence="1">Pol IV</shortName>
        <ecNumber evidence="1">2.7.7.7</ecNumber>
    </recommendedName>
</protein>
<name>DPO4_CITK8</name>
<comment type="function">
    <text evidence="1">Poorly processive, error-prone DNA polymerase involved in untargeted mutagenesis. Copies undamaged DNA at stalled replication forks, which arise in vivo from mismatched or misaligned primer ends. These misaligned primers can be extended by PolIV. Exhibits no 3'-5' exonuclease (proofreading) activity. May be involved in translesional synthesis, in conjunction with the beta clamp from PolIII.</text>
</comment>
<comment type="catalytic activity">
    <reaction evidence="1">
        <text>DNA(n) + a 2'-deoxyribonucleoside 5'-triphosphate = DNA(n+1) + diphosphate</text>
        <dbReference type="Rhea" id="RHEA:22508"/>
        <dbReference type="Rhea" id="RHEA-COMP:17339"/>
        <dbReference type="Rhea" id="RHEA-COMP:17340"/>
        <dbReference type="ChEBI" id="CHEBI:33019"/>
        <dbReference type="ChEBI" id="CHEBI:61560"/>
        <dbReference type="ChEBI" id="CHEBI:173112"/>
        <dbReference type="EC" id="2.7.7.7"/>
    </reaction>
</comment>
<comment type="cofactor">
    <cofactor evidence="1">
        <name>Mg(2+)</name>
        <dbReference type="ChEBI" id="CHEBI:18420"/>
    </cofactor>
    <text evidence="1">Binds 2 magnesium ions per subunit.</text>
</comment>
<comment type="subunit">
    <text evidence="1">Monomer.</text>
</comment>
<comment type="subcellular location">
    <subcellularLocation>
        <location evidence="1">Cytoplasm</location>
    </subcellularLocation>
</comment>
<comment type="similarity">
    <text evidence="1">Belongs to the DNA polymerase type-Y family.</text>
</comment>
<keyword id="KW-0963">Cytoplasm</keyword>
<keyword id="KW-0227">DNA damage</keyword>
<keyword id="KW-0234">DNA repair</keyword>
<keyword id="KW-0235">DNA replication</keyword>
<keyword id="KW-0238">DNA-binding</keyword>
<keyword id="KW-0239">DNA-directed DNA polymerase</keyword>
<keyword id="KW-0460">Magnesium</keyword>
<keyword id="KW-0479">Metal-binding</keyword>
<keyword id="KW-0515">Mutator protein</keyword>
<keyword id="KW-0548">Nucleotidyltransferase</keyword>
<keyword id="KW-1185">Reference proteome</keyword>
<keyword id="KW-0808">Transferase</keyword>
<accession>A8AKQ2</accession>
<evidence type="ECO:0000255" key="1">
    <source>
        <dbReference type="HAMAP-Rule" id="MF_01113"/>
    </source>
</evidence>
<sequence length="351" mass="39803">MRKIIHVDMDCFYAAVEMRDNPALRDIPIAIGGSRERRGVISTANYPARKFGVRSAMPTGMALKLCPHLTLLPGRFEAYKEASQHIREIFSRYTSRIEPLSLDEAYLDVTDSTYCHGSATLIAQEIRQTIFNELQLTASAGIAPVKFLAKIASDLNKPNGQYVITPADVPEFLKTLPLGKIPGVGKVSAARLETMGLRTCEDVQKYDLAMLLKRFGKFGRVLWERSQGIDERDVNNERLRKSIGVERTLAEDIHEWAECEAIIERLYPELERRLAKVKPDLLIARQGVKLKFNDFQLTTQEHVWPRLSKDDLITTARKTWNERRGGRGVRLVGLHVTLLDPQLERQLLLGL</sequence>